<gene>
    <name type="primary">clpB</name>
    <name type="ordered locus">TC_0389</name>
</gene>
<dbReference type="EMBL" id="AE002160">
    <property type="protein sequence ID" value="AAF39246.1"/>
    <property type="molecule type" value="Genomic_DNA"/>
</dbReference>
<dbReference type="PIR" id="A81707">
    <property type="entry name" value="A81707"/>
</dbReference>
<dbReference type="RefSeq" id="WP_010230340.1">
    <property type="nucleotide sequence ID" value="NZ_CP063055.1"/>
</dbReference>
<dbReference type="SMR" id="Q9PKS5"/>
<dbReference type="GeneID" id="1245741"/>
<dbReference type="KEGG" id="cmu:TC_0389"/>
<dbReference type="eggNOG" id="COG0542">
    <property type="taxonomic scope" value="Bacteria"/>
</dbReference>
<dbReference type="HOGENOM" id="CLU_005070_4_0_0"/>
<dbReference type="OrthoDB" id="9803641at2"/>
<dbReference type="Proteomes" id="UP000000800">
    <property type="component" value="Chromosome"/>
</dbReference>
<dbReference type="GO" id="GO:0005737">
    <property type="term" value="C:cytoplasm"/>
    <property type="evidence" value="ECO:0007669"/>
    <property type="project" value="UniProtKB-SubCell"/>
</dbReference>
<dbReference type="GO" id="GO:0005524">
    <property type="term" value="F:ATP binding"/>
    <property type="evidence" value="ECO:0007669"/>
    <property type="project" value="UniProtKB-KW"/>
</dbReference>
<dbReference type="GO" id="GO:0016887">
    <property type="term" value="F:ATP hydrolysis activity"/>
    <property type="evidence" value="ECO:0007669"/>
    <property type="project" value="InterPro"/>
</dbReference>
<dbReference type="GO" id="GO:0034605">
    <property type="term" value="P:cellular response to heat"/>
    <property type="evidence" value="ECO:0007669"/>
    <property type="project" value="TreeGrafter"/>
</dbReference>
<dbReference type="CDD" id="cd00009">
    <property type="entry name" value="AAA"/>
    <property type="match status" value="1"/>
</dbReference>
<dbReference type="CDD" id="cd19499">
    <property type="entry name" value="RecA-like_ClpB_Hsp104-like"/>
    <property type="match status" value="1"/>
</dbReference>
<dbReference type="FunFam" id="3.40.50.300:FF:000120">
    <property type="entry name" value="ATP-dependent chaperone ClpB"/>
    <property type="match status" value="1"/>
</dbReference>
<dbReference type="FunFam" id="3.40.50.300:FF:000025">
    <property type="entry name" value="ATP-dependent Clp protease subunit"/>
    <property type="match status" value="1"/>
</dbReference>
<dbReference type="FunFam" id="3.40.50.300:FF:000010">
    <property type="entry name" value="Chaperone clpB 1, putative"/>
    <property type="match status" value="1"/>
</dbReference>
<dbReference type="Gene3D" id="1.10.8.60">
    <property type="match status" value="1"/>
</dbReference>
<dbReference type="Gene3D" id="1.10.1780.10">
    <property type="entry name" value="Clp, N-terminal domain"/>
    <property type="match status" value="1"/>
</dbReference>
<dbReference type="Gene3D" id="3.40.50.300">
    <property type="entry name" value="P-loop containing nucleotide triphosphate hydrolases"/>
    <property type="match status" value="3"/>
</dbReference>
<dbReference type="InterPro" id="IPR003593">
    <property type="entry name" value="AAA+_ATPase"/>
</dbReference>
<dbReference type="InterPro" id="IPR003959">
    <property type="entry name" value="ATPase_AAA_core"/>
</dbReference>
<dbReference type="InterPro" id="IPR019489">
    <property type="entry name" value="Clp_ATPase_C"/>
</dbReference>
<dbReference type="InterPro" id="IPR036628">
    <property type="entry name" value="Clp_N_dom_sf"/>
</dbReference>
<dbReference type="InterPro" id="IPR004176">
    <property type="entry name" value="Clp_R_dom"/>
</dbReference>
<dbReference type="InterPro" id="IPR001270">
    <property type="entry name" value="ClpA/B"/>
</dbReference>
<dbReference type="InterPro" id="IPR018368">
    <property type="entry name" value="ClpA/B_CS1"/>
</dbReference>
<dbReference type="InterPro" id="IPR028299">
    <property type="entry name" value="ClpA/B_CS2"/>
</dbReference>
<dbReference type="InterPro" id="IPR041546">
    <property type="entry name" value="ClpA/ClpB_AAA_lid"/>
</dbReference>
<dbReference type="InterPro" id="IPR050130">
    <property type="entry name" value="ClpA_ClpB"/>
</dbReference>
<dbReference type="InterPro" id="IPR027417">
    <property type="entry name" value="P-loop_NTPase"/>
</dbReference>
<dbReference type="PANTHER" id="PTHR11638">
    <property type="entry name" value="ATP-DEPENDENT CLP PROTEASE"/>
    <property type="match status" value="1"/>
</dbReference>
<dbReference type="PANTHER" id="PTHR11638:SF18">
    <property type="entry name" value="HEAT SHOCK PROTEIN 104"/>
    <property type="match status" value="1"/>
</dbReference>
<dbReference type="Pfam" id="PF00004">
    <property type="entry name" value="AAA"/>
    <property type="match status" value="1"/>
</dbReference>
<dbReference type="Pfam" id="PF07724">
    <property type="entry name" value="AAA_2"/>
    <property type="match status" value="1"/>
</dbReference>
<dbReference type="Pfam" id="PF17871">
    <property type="entry name" value="AAA_lid_9"/>
    <property type="match status" value="1"/>
</dbReference>
<dbReference type="Pfam" id="PF02861">
    <property type="entry name" value="Clp_N"/>
    <property type="match status" value="2"/>
</dbReference>
<dbReference type="Pfam" id="PF10431">
    <property type="entry name" value="ClpB_D2-small"/>
    <property type="match status" value="1"/>
</dbReference>
<dbReference type="PRINTS" id="PR00300">
    <property type="entry name" value="CLPPROTEASEA"/>
</dbReference>
<dbReference type="SMART" id="SM00382">
    <property type="entry name" value="AAA"/>
    <property type="match status" value="2"/>
</dbReference>
<dbReference type="SMART" id="SM01086">
    <property type="entry name" value="ClpB_D2-small"/>
    <property type="match status" value="1"/>
</dbReference>
<dbReference type="SUPFAM" id="SSF81923">
    <property type="entry name" value="Double Clp-N motif"/>
    <property type="match status" value="1"/>
</dbReference>
<dbReference type="SUPFAM" id="SSF52540">
    <property type="entry name" value="P-loop containing nucleoside triphosphate hydrolases"/>
    <property type="match status" value="2"/>
</dbReference>
<dbReference type="PROSITE" id="PS51903">
    <property type="entry name" value="CLP_R"/>
    <property type="match status" value="1"/>
</dbReference>
<dbReference type="PROSITE" id="PS00870">
    <property type="entry name" value="CLPAB_1"/>
    <property type="match status" value="1"/>
</dbReference>
<dbReference type="PROSITE" id="PS00871">
    <property type="entry name" value="CLPAB_2"/>
    <property type="match status" value="1"/>
</dbReference>
<reference key="1">
    <citation type="journal article" date="2000" name="Nucleic Acids Res.">
        <title>Genome sequences of Chlamydia trachomatis MoPn and Chlamydia pneumoniae AR39.</title>
        <authorList>
            <person name="Read T.D."/>
            <person name="Brunham R.C."/>
            <person name="Shen C."/>
            <person name="Gill S.R."/>
            <person name="Heidelberg J.F."/>
            <person name="White O."/>
            <person name="Hickey E.K."/>
            <person name="Peterson J.D."/>
            <person name="Utterback T.R."/>
            <person name="Berry K.J."/>
            <person name="Bass S."/>
            <person name="Linher K.D."/>
            <person name="Weidman J.F."/>
            <person name="Khouri H.M."/>
            <person name="Craven B."/>
            <person name="Bowman C."/>
            <person name="Dodson R.J."/>
            <person name="Gwinn M.L."/>
            <person name="Nelson W.C."/>
            <person name="DeBoy R.T."/>
            <person name="Kolonay J.F."/>
            <person name="McClarty G."/>
            <person name="Salzberg S.L."/>
            <person name="Eisen J.A."/>
            <person name="Fraser C.M."/>
        </authorList>
    </citation>
    <scope>NUCLEOTIDE SEQUENCE [LARGE SCALE GENOMIC DNA]</scope>
    <source>
        <strain>MoPn / Nigg</strain>
    </source>
</reference>
<name>CLPB_CHLMU</name>
<sequence>MEKFSDAVSEALEKAFELAKDAKHSYVTENHLLKSLLQNPGSLFCLVIKDVHGNLGLLTSAVDDALHREPTVVEGAAIPKPSPSLQQLLLNAQEEARSMGDEYLSGDHLLLAFWKTTKEPFASWRKTVKTSPEALKELIIKLRQGSRMDSPSAEENLKGLEKYCKNLTILAREGKLDPVIGRDEEIRRTIQVLSRRTKNNPMLIGEPGVGKTAIAEGLALRIVQGDVPESLKDKHLYVLDMGALIAGAKYRGEFEERLKSVLKGVEASEGACILFIDEVHTLVGAGATDGAMDAANLLKPALARGTLHCIGATTLNEYQKYIEKDAALERRFQPIFVTEPSLEDAVFILRGLREKYEIFHGVRITEGALNAAVVLSYRYITDRFLPDKAIDLIDEAASLIRMQIGSLPLPIDEKERELSALIVKQEAIKREQAPAYQEEANEMQKAIDRVKEELAALRLRWDEEKGLIAGLKEKKNSLENLKFAEEEAERTADYNRVAELRYSLIPSLEKEIRLAEEALNQRDGRLLQEEVDERLIAQVVANWTGIPVQKMLEGESEKLLVLEESLEERVVGQPFAITAVSDSIRSARVGLSDPQRPLGVFLFLGPTGVGKTELAKALAELLFNKEEAMIRFDMTEYMEKHSVSKLIGSPPGYVGYEEGGSLSEALRRRPYSVVLFDEIEKADKEVFNILLQIFDDGILTDSKKRKVNCKNALFIMTSNIGSQELADYCAKKGTIVDKEAVLSVVAPALKNYFSPEFINRIDEILPFVPLTTEDIVKIVGIQMNRVALRLLERRISLTWDDSVVLFLSEQGYDGAFGARPLKRLIQQKVVTMLSKALLKGDIKSGMSVELTMAKDVVVFKTKTNSVV</sequence>
<accession>Q9PKS5</accession>
<protein>
    <recommendedName>
        <fullName>Chaperone protein ClpB</fullName>
    </recommendedName>
</protein>
<evidence type="ECO:0000250" key="1"/>
<evidence type="ECO:0000255" key="2">
    <source>
        <dbReference type="PROSITE-ProRule" id="PRU01251"/>
    </source>
</evidence>
<evidence type="ECO:0000305" key="3"/>
<organism>
    <name type="scientific">Chlamydia muridarum (strain MoPn / Nigg)</name>
    <dbReference type="NCBI Taxonomy" id="243161"/>
    <lineage>
        <taxon>Bacteria</taxon>
        <taxon>Pseudomonadati</taxon>
        <taxon>Chlamydiota</taxon>
        <taxon>Chlamydiia</taxon>
        <taxon>Chlamydiales</taxon>
        <taxon>Chlamydiaceae</taxon>
        <taxon>Chlamydia/Chlamydophila group</taxon>
        <taxon>Chlamydia</taxon>
    </lineage>
</organism>
<feature type="chain" id="PRO_0000191105" description="Chaperone protein ClpB">
    <location>
        <begin position="1"/>
        <end position="867"/>
    </location>
</feature>
<feature type="domain" description="Clp R" evidence="2">
    <location>
        <begin position="1"/>
        <end position="145"/>
    </location>
</feature>
<feature type="region of interest" description="Repeat 1" evidence="2">
    <location>
        <begin position="4"/>
        <end position="69"/>
    </location>
</feature>
<feature type="region of interest" description="Repeat 2" evidence="2">
    <location>
        <begin position="81"/>
        <end position="145"/>
    </location>
</feature>
<feature type="region of interest" description="NBD1" evidence="1">
    <location>
        <begin position="158"/>
        <end position="339"/>
    </location>
</feature>
<feature type="region of interest" description="Linker" evidence="1">
    <location>
        <begin position="340"/>
        <end position="545"/>
    </location>
</feature>
<feature type="region of interest" description="NBD2" evidence="1">
    <location>
        <begin position="555"/>
        <end position="769"/>
    </location>
</feature>
<feature type="region of interest" description="C-terminal" evidence="1">
    <location>
        <begin position="770"/>
        <end position="867"/>
    </location>
</feature>
<feature type="coiled-coil region" evidence="1">
    <location>
        <begin position="390"/>
        <end position="524"/>
    </location>
</feature>
<feature type="binding site" evidence="1">
    <location>
        <begin position="205"/>
        <end position="212"/>
    </location>
    <ligand>
        <name>ATP</name>
        <dbReference type="ChEBI" id="CHEBI:30616"/>
        <label>1</label>
    </ligand>
</feature>
<feature type="binding site" evidence="1">
    <location>
        <begin position="605"/>
        <end position="612"/>
    </location>
    <ligand>
        <name>ATP</name>
        <dbReference type="ChEBI" id="CHEBI:30616"/>
        <label>2</label>
    </ligand>
</feature>
<proteinExistence type="inferred from homology"/>
<comment type="function">
    <text evidence="1">Part of a stress-induced multi-chaperone system, it is involved in the recovery of the cell from heat-induced damage, in cooperation with DnaK, DnaJ and GrpE. Acts before DnaK, in the processing of protein aggregates. Protein binding stimulates the ATPase activity; ATP hydrolysis unfolds the denatured protein aggregates, which probably helps expose new hydrophobic binding sites on the surface of ClpB-bound aggregates, contributing to the solubilization and refolding of denatured protein aggregates by DnaK (By similarity).</text>
</comment>
<comment type="subunit">
    <text evidence="1">Homohexamer. The oligomerization is ATP-dependent (By similarity).</text>
</comment>
<comment type="subcellular location">
    <subcellularLocation>
        <location evidence="3">Cytoplasm</location>
    </subcellularLocation>
</comment>
<comment type="domain">
    <text evidence="1">The Clp repeat (R) domain probably functions as a substrate-discriminating domain, recruiting aggregated proteins to the ClpB hexamer and/or stabilizing bound proteins. The NBD2 domain is responsible for oligomerization, whereas the NBD1 domain stabilizes the hexamer probably in an ATP-dependent manner. The movement of the coiled-coil domain is essential for ClpB ability to rescue proteins from an aggregated state, probably by pulling apart large aggregated proteins, which are bound between the coiled-coils motifs of adjacent ClpB subunits in the functional hexamer (By similarity).</text>
</comment>
<comment type="similarity">
    <text evidence="3">Belongs to the ClpA/ClpB family.</text>
</comment>
<keyword id="KW-0067">ATP-binding</keyword>
<keyword id="KW-0143">Chaperone</keyword>
<keyword id="KW-0175">Coiled coil</keyword>
<keyword id="KW-0963">Cytoplasm</keyword>
<keyword id="KW-0547">Nucleotide-binding</keyword>
<keyword id="KW-0677">Repeat</keyword>
<keyword id="KW-0346">Stress response</keyword>